<proteinExistence type="inferred from homology"/>
<evidence type="ECO:0000255" key="1">
    <source>
        <dbReference type="HAMAP-Rule" id="MF_01412"/>
    </source>
</evidence>
<evidence type="ECO:0000255" key="2">
    <source>
        <dbReference type="PROSITE-ProRule" id="PRU00543"/>
    </source>
</evidence>
<organism>
    <name type="scientific">Yersinia pestis bv. Antiqua (strain Angola)</name>
    <dbReference type="NCBI Taxonomy" id="349746"/>
    <lineage>
        <taxon>Bacteria</taxon>
        <taxon>Pseudomonadati</taxon>
        <taxon>Pseudomonadota</taxon>
        <taxon>Gammaproteobacteria</taxon>
        <taxon>Enterobacterales</taxon>
        <taxon>Yersiniaceae</taxon>
        <taxon>Yersinia</taxon>
    </lineage>
</organism>
<reference key="1">
    <citation type="journal article" date="2010" name="J. Bacteriol.">
        <title>Genome sequence of the deep-rooted Yersinia pestis strain Angola reveals new insights into the evolution and pangenome of the plague bacterium.</title>
        <authorList>
            <person name="Eppinger M."/>
            <person name="Worsham P.L."/>
            <person name="Nikolich M.P."/>
            <person name="Riley D.R."/>
            <person name="Sebastian Y."/>
            <person name="Mou S."/>
            <person name="Achtman M."/>
            <person name="Lindler L.E."/>
            <person name="Ravel J."/>
        </authorList>
    </citation>
    <scope>NUCLEOTIDE SEQUENCE [LARGE SCALE GENOMIC DNA]</scope>
    <source>
        <strain>Angola</strain>
    </source>
</reference>
<feature type="chain" id="PRO_1000145533" description="Glutathione-regulated potassium-efflux system protein KefB">
    <location>
        <begin position="1"/>
        <end position="602"/>
    </location>
</feature>
<feature type="transmembrane region" description="Helical" evidence="1">
    <location>
        <begin position="4"/>
        <end position="24"/>
    </location>
</feature>
<feature type="transmembrane region" description="Helical" evidence="1">
    <location>
        <begin position="29"/>
        <end position="49"/>
    </location>
</feature>
<feature type="transmembrane region" description="Helical" evidence="1">
    <location>
        <begin position="55"/>
        <end position="75"/>
    </location>
</feature>
<feature type="transmembrane region" description="Helical" evidence="1">
    <location>
        <begin position="87"/>
        <end position="107"/>
    </location>
</feature>
<feature type="transmembrane region" description="Helical" evidence="1">
    <location>
        <begin position="115"/>
        <end position="135"/>
    </location>
</feature>
<feature type="transmembrane region" description="Helical" evidence="1">
    <location>
        <begin position="152"/>
        <end position="172"/>
    </location>
</feature>
<feature type="transmembrane region" description="Helical" evidence="1">
    <location>
        <begin position="181"/>
        <end position="201"/>
    </location>
</feature>
<feature type="transmembrane region" description="Helical" evidence="1">
    <location>
        <begin position="207"/>
        <end position="227"/>
    </location>
</feature>
<feature type="transmembrane region" description="Helical" evidence="1">
    <location>
        <begin position="230"/>
        <end position="250"/>
    </location>
</feature>
<feature type="transmembrane region" description="Helical" evidence="1">
    <location>
        <begin position="261"/>
        <end position="281"/>
    </location>
</feature>
<feature type="transmembrane region" description="Helical" evidence="1">
    <location>
        <begin position="296"/>
        <end position="318"/>
    </location>
</feature>
<feature type="transmembrane region" description="Helical" evidence="1">
    <location>
        <begin position="326"/>
        <end position="346"/>
    </location>
</feature>
<feature type="transmembrane region" description="Helical" evidence="1">
    <location>
        <begin position="356"/>
        <end position="376"/>
    </location>
</feature>
<feature type="domain" description="RCK N-terminal" evidence="2">
    <location>
        <begin position="400"/>
        <end position="519"/>
    </location>
</feature>
<sequence length="602" mass="66328">MEGTGLLTAVLVFLFAAVVAVPIAQRLGIGAVLGYLIAGIAIGPWGLGFIRDVDEILHFSELGVVFLMFIIGLELNPAKLWQLRRSIFGVGAGQVVITAAVLGALLYFTQFAWQAAVIGGVGLAMSSTAMALQLMREKGMNRNEGGQLGFSVLLFQDMAVIPALALIPILAGNEGGANDWVKIGLKIAAFAGMLIGGRYLLRPLFRYIVASGVREVFTAAALLVVLGSALFMDALGLSMALGTFIAGILLAESEFQHELEIAIEPFKGLLLGLFFISVGMALDLGVLFTHLLDVLLGVLALVFIKSAILYGLARVFGLRRSVRLQFAGVLSQGGEFAFVLFSAAFSQRVLNAEQLALLLVVVTLSMMTTPLLMQVIDRILVRRYNAQEESDEKPFVEDNDPQVIIVGFGRFGQVIGRLLMANKMRITVLERDVSAVSMMRKYGYKVYYGDATELELLRAAGAEKAKAIVITCNEPEDTMALVHLCQQHFPNLHILARARGRVEAHELLQNGVKDFTRETFSSALELGRKTLLELGMHPHQAYRAQQHFRRLDMRMLRELMPQHHGDVAQISRIKEARRELEDIFQREMLHESRQLDGWDEYE</sequence>
<protein>
    <recommendedName>
        <fullName evidence="1">Glutathione-regulated potassium-efflux system protein KefB</fullName>
    </recommendedName>
    <alternativeName>
        <fullName evidence="1">K(+)/H(+) antiporter</fullName>
    </alternativeName>
</protein>
<accession>A9R473</accession>
<keyword id="KW-0050">Antiport</keyword>
<keyword id="KW-0997">Cell inner membrane</keyword>
<keyword id="KW-1003">Cell membrane</keyword>
<keyword id="KW-0406">Ion transport</keyword>
<keyword id="KW-0472">Membrane</keyword>
<keyword id="KW-0630">Potassium</keyword>
<keyword id="KW-0633">Potassium transport</keyword>
<keyword id="KW-0812">Transmembrane</keyword>
<keyword id="KW-1133">Transmembrane helix</keyword>
<keyword id="KW-0813">Transport</keyword>
<comment type="function">
    <text evidence="1">Pore-forming subunit of a potassium efflux system that confers protection against electrophiles. Catalyzes K(+)/H(+) antiport.</text>
</comment>
<comment type="subunit">
    <text evidence="1">Interacts with the regulatory subunit KefG.</text>
</comment>
<comment type="subcellular location">
    <subcellularLocation>
        <location evidence="1">Cell inner membrane</location>
        <topology evidence="1">Multi-pass membrane protein</topology>
    </subcellularLocation>
</comment>
<comment type="similarity">
    <text evidence="1">Belongs to the monovalent cation:proton antiporter 2 (CPA2) transporter (TC 2.A.37) family. KefB subfamily.</text>
</comment>
<name>KEFB_YERPG</name>
<dbReference type="EMBL" id="CP000901">
    <property type="protein sequence ID" value="ABX87170.1"/>
    <property type="molecule type" value="Genomic_DNA"/>
</dbReference>
<dbReference type="RefSeq" id="WP_002212314.1">
    <property type="nucleotide sequence ID" value="NZ_CP009935.1"/>
</dbReference>
<dbReference type="SMR" id="A9R473"/>
<dbReference type="GeneID" id="57974412"/>
<dbReference type="KEGG" id="ypg:YpAngola_A3687"/>
<dbReference type="PATRIC" id="fig|349746.12.peg.392"/>
<dbReference type="GO" id="GO:0005886">
    <property type="term" value="C:plasma membrane"/>
    <property type="evidence" value="ECO:0007669"/>
    <property type="project" value="UniProtKB-SubCell"/>
</dbReference>
<dbReference type="GO" id="GO:0015503">
    <property type="term" value="F:glutathione-regulated potassium exporter activity"/>
    <property type="evidence" value="ECO:0007669"/>
    <property type="project" value="UniProtKB-UniRule"/>
</dbReference>
<dbReference type="GO" id="GO:1902600">
    <property type="term" value="P:proton transmembrane transport"/>
    <property type="evidence" value="ECO:0007669"/>
    <property type="project" value="InterPro"/>
</dbReference>
<dbReference type="FunFam" id="1.20.1530.20:FF:000001">
    <property type="entry name" value="Glutathione-regulated potassium-efflux system protein KefB"/>
    <property type="match status" value="1"/>
</dbReference>
<dbReference type="FunFam" id="3.40.50.720:FF:000036">
    <property type="entry name" value="Glutathione-regulated potassium-efflux system protein KefB"/>
    <property type="match status" value="1"/>
</dbReference>
<dbReference type="Gene3D" id="1.20.1530.20">
    <property type="match status" value="1"/>
</dbReference>
<dbReference type="Gene3D" id="3.40.50.720">
    <property type="entry name" value="NAD(P)-binding Rossmann-like Domain"/>
    <property type="match status" value="1"/>
</dbReference>
<dbReference type="HAMAP" id="MF_01412">
    <property type="entry name" value="K_H_efflux_KefB"/>
    <property type="match status" value="1"/>
</dbReference>
<dbReference type="InterPro" id="IPR006153">
    <property type="entry name" value="Cation/H_exchanger_TM"/>
</dbReference>
<dbReference type="InterPro" id="IPR004771">
    <property type="entry name" value="K/H_exchanger"/>
</dbReference>
<dbReference type="InterPro" id="IPR020884">
    <property type="entry name" value="K_H_efflux_KefB"/>
</dbReference>
<dbReference type="InterPro" id="IPR038770">
    <property type="entry name" value="Na+/solute_symporter_sf"/>
</dbReference>
<dbReference type="InterPro" id="IPR036291">
    <property type="entry name" value="NAD(P)-bd_dom_sf"/>
</dbReference>
<dbReference type="InterPro" id="IPR003148">
    <property type="entry name" value="RCK_N"/>
</dbReference>
<dbReference type="NCBIfam" id="TIGR00932">
    <property type="entry name" value="2a37"/>
    <property type="match status" value="1"/>
</dbReference>
<dbReference type="NCBIfam" id="NF002973">
    <property type="entry name" value="PRK03659.1"/>
    <property type="match status" value="1"/>
</dbReference>
<dbReference type="PANTHER" id="PTHR46157">
    <property type="entry name" value="K(+) EFFLUX ANTIPORTER 3, CHLOROPLASTIC"/>
    <property type="match status" value="1"/>
</dbReference>
<dbReference type="PANTHER" id="PTHR46157:SF4">
    <property type="entry name" value="K(+) EFFLUX ANTIPORTER 3, CHLOROPLASTIC"/>
    <property type="match status" value="1"/>
</dbReference>
<dbReference type="Pfam" id="PF00999">
    <property type="entry name" value="Na_H_Exchanger"/>
    <property type="match status" value="1"/>
</dbReference>
<dbReference type="Pfam" id="PF02254">
    <property type="entry name" value="TrkA_N"/>
    <property type="match status" value="1"/>
</dbReference>
<dbReference type="SUPFAM" id="SSF51735">
    <property type="entry name" value="NAD(P)-binding Rossmann-fold domains"/>
    <property type="match status" value="1"/>
</dbReference>
<dbReference type="PROSITE" id="PS51201">
    <property type="entry name" value="RCK_N"/>
    <property type="match status" value="1"/>
</dbReference>
<gene>
    <name evidence="1" type="primary">kefB</name>
    <name type="ordered locus">YpAngola_A3687</name>
</gene>